<name>SYGB_RICPU</name>
<proteinExistence type="inferred from homology"/>
<sequence length="664" mass="75802">MSELLLELFSEEIPAFMQKNAEEGYLNIFTKIFEENEIFAKVQVFAGPRRITLHATHLPKITLPKEEEIKGPSIEAPETAINGFCKAHNVSKLELPTKLISNQLYYFFVKKTEEREIKEILPEIIIEAINKYSWAKSMFWGDYKIKWIRPLRNILCIFNGEILPMQFGHLTANNITYGHRLTDNKKLEVTDFEDYRNKLLENHVILERAKREAIIKTGLLELANSHELIIKEDNRLVEEVVGLSEFPIVLLGKIPQKFLELPKEVLISSMRTHQKYFCLFDKTGNFTPYFLFVSNGRFTNAELVIQGNEKVLSARLSDALYFCKQDIAKTLESRLGQLEAVTFHAKLGNLREKIERITDICNYIAPNNKDLITAARLCKSDLVSEMVWEFPDLQGIMGYYYAKHEGLNAEIAAAIKDHYKPQGLSDNVPSGNAALLALADKLDSLVGLMIAGETPTGSGDPYALRRQALGIIRIILENKLELNFNDLINFSINLYKDSSDENKNLIISFFEERAKFYFKNDYDIALINAVLDLNLIDTNFKLDELKEFLIEDAGKQLLNAYKRASNIIGDQKITGLVDASLFSTQPEKELFEVIQKISPEIIDSIADKDYKKALNLLSSLLTPITSFFDNILVNDSDPKIAQNRLSLLQNICELFDKVAKFNRL</sequence>
<evidence type="ECO:0000255" key="1">
    <source>
        <dbReference type="HAMAP-Rule" id="MF_00255"/>
    </source>
</evidence>
<organism>
    <name type="scientific">Rickettsia peacockii (strain Rustic)</name>
    <dbReference type="NCBI Taxonomy" id="562019"/>
    <lineage>
        <taxon>Bacteria</taxon>
        <taxon>Pseudomonadati</taxon>
        <taxon>Pseudomonadota</taxon>
        <taxon>Alphaproteobacteria</taxon>
        <taxon>Rickettsiales</taxon>
        <taxon>Rickettsiaceae</taxon>
        <taxon>Rickettsieae</taxon>
        <taxon>Rickettsia</taxon>
        <taxon>spotted fever group</taxon>
    </lineage>
</organism>
<protein>
    <recommendedName>
        <fullName evidence="1">Glycine--tRNA ligase beta subunit</fullName>
        <ecNumber evidence="1">6.1.1.14</ecNumber>
    </recommendedName>
    <alternativeName>
        <fullName evidence="1">Glycyl-tRNA synthetase beta subunit</fullName>
        <shortName evidence="1">GlyRS</shortName>
    </alternativeName>
</protein>
<gene>
    <name evidence="1" type="primary">glyS</name>
    <name type="ordered locus">RPR_07440</name>
</gene>
<feature type="chain" id="PRO_1000204611" description="Glycine--tRNA ligase beta subunit">
    <location>
        <begin position="1"/>
        <end position="664"/>
    </location>
</feature>
<keyword id="KW-0030">Aminoacyl-tRNA synthetase</keyword>
<keyword id="KW-0067">ATP-binding</keyword>
<keyword id="KW-0963">Cytoplasm</keyword>
<keyword id="KW-0436">Ligase</keyword>
<keyword id="KW-0547">Nucleotide-binding</keyword>
<keyword id="KW-0648">Protein biosynthesis</keyword>
<dbReference type="EC" id="6.1.1.14" evidence="1"/>
<dbReference type="EMBL" id="CP001227">
    <property type="protein sequence ID" value="ACR47898.1"/>
    <property type="molecule type" value="Genomic_DNA"/>
</dbReference>
<dbReference type="RefSeq" id="WP_012737051.1">
    <property type="nucleotide sequence ID" value="NC_012730.1"/>
</dbReference>
<dbReference type="SMR" id="C4K2V3"/>
<dbReference type="KEGG" id="rpk:RPR_07440"/>
<dbReference type="HOGENOM" id="CLU_007220_2_1_5"/>
<dbReference type="Proteomes" id="UP000005015">
    <property type="component" value="Chromosome"/>
</dbReference>
<dbReference type="GO" id="GO:0005829">
    <property type="term" value="C:cytosol"/>
    <property type="evidence" value="ECO:0007669"/>
    <property type="project" value="TreeGrafter"/>
</dbReference>
<dbReference type="GO" id="GO:0004814">
    <property type="term" value="F:arginine-tRNA ligase activity"/>
    <property type="evidence" value="ECO:0007669"/>
    <property type="project" value="InterPro"/>
</dbReference>
<dbReference type="GO" id="GO:0005524">
    <property type="term" value="F:ATP binding"/>
    <property type="evidence" value="ECO:0007669"/>
    <property type="project" value="UniProtKB-UniRule"/>
</dbReference>
<dbReference type="GO" id="GO:0004820">
    <property type="term" value="F:glycine-tRNA ligase activity"/>
    <property type="evidence" value="ECO:0007669"/>
    <property type="project" value="UniProtKB-UniRule"/>
</dbReference>
<dbReference type="GO" id="GO:0006420">
    <property type="term" value="P:arginyl-tRNA aminoacylation"/>
    <property type="evidence" value="ECO:0007669"/>
    <property type="project" value="InterPro"/>
</dbReference>
<dbReference type="GO" id="GO:0006426">
    <property type="term" value="P:glycyl-tRNA aminoacylation"/>
    <property type="evidence" value="ECO:0007669"/>
    <property type="project" value="UniProtKB-UniRule"/>
</dbReference>
<dbReference type="HAMAP" id="MF_00255">
    <property type="entry name" value="Gly_tRNA_synth_beta"/>
    <property type="match status" value="1"/>
</dbReference>
<dbReference type="InterPro" id="IPR008909">
    <property type="entry name" value="DALR_anticod-bd"/>
</dbReference>
<dbReference type="InterPro" id="IPR015944">
    <property type="entry name" value="Gly-tRNA-synth_bsu"/>
</dbReference>
<dbReference type="InterPro" id="IPR006194">
    <property type="entry name" value="Gly-tRNA-synth_heterodimer"/>
</dbReference>
<dbReference type="NCBIfam" id="TIGR00211">
    <property type="entry name" value="glyS"/>
    <property type="match status" value="1"/>
</dbReference>
<dbReference type="PANTHER" id="PTHR30075:SF2">
    <property type="entry name" value="GLYCINE--TRNA LIGASE, CHLOROPLASTIC_MITOCHONDRIAL 2"/>
    <property type="match status" value="1"/>
</dbReference>
<dbReference type="PANTHER" id="PTHR30075">
    <property type="entry name" value="GLYCYL-TRNA SYNTHETASE"/>
    <property type="match status" value="1"/>
</dbReference>
<dbReference type="Pfam" id="PF05746">
    <property type="entry name" value="DALR_1"/>
    <property type="match status" value="1"/>
</dbReference>
<dbReference type="Pfam" id="PF02092">
    <property type="entry name" value="tRNA_synt_2f"/>
    <property type="match status" value="1"/>
</dbReference>
<dbReference type="PRINTS" id="PR01045">
    <property type="entry name" value="TRNASYNTHGB"/>
</dbReference>
<dbReference type="SUPFAM" id="SSF109604">
    <property type="entry name" value="HD-domain/PDEase-like"/>
    <property type="match status" value="1"/>
</dbReference>
<dbReference type="PROSITE" id="PS50861">
    <property type="entry name" value="AA_TRNA_LIGASE_II_GLYAB"/>
    <property type="match status" value="1"/>
</dbReference>
<reference key="1">
    <citation type="journal article" date="2009" name="PLoS ONE">
        <title>Genome sequence of the endosymbiont Rickettsia peacockii and comparison with virulent Rickettsia rickettsii: identification of virulence factors.</title>
        <authorList>
            <person name="Felsheim R.F."/>
            <person name="Kurtti T.J."/>
            <person name="Munderloh U.G."/>
        </authorList>
    </citation>
    <scope>NUCLEOTIDE SEQUENCE [LARGE SCALE GENOMIC DNA]</scope>
    <source>
        <strain>Rustic</strain>
    </source>
</reference>
<comment type="catalytic activity">
    <reaction evidence="1">
        <text>tRNA(Gly) + glycine + ATP = glycyl-tRNA(Gly) + AMP + diphosphate</text>
        <dbReference type="Rhea" id="RHEA:16013"/>
        <dbReference type="Rhea" id="RHEA-COMP:9664"/>
        <dbReference type="Rhea" id="RHEA-COMP:9683"/>
        <dbReference type="ChEBI" id="CHEBI:30616"/>
        <dbReference type="ChEBI" id="CHEBI:33019"/>
        <dbReference type="ChEBI" id="CHEBI:57305"/>
        <dbReference type="ChEBI" id="CHEBI:78442"/>
        <dbReference type="ChEBI" id="CHEBI:78522"/>
        <dbReference type="ChEBI" id="CHEBI:456215"/>
        <dbReference type="EC" id="6.1.1.14"/>
    </reaction>
</comment>
<comment type="subunit">
    <text evidence="1">Tetramer of two alpha and two beta subunits.</text>
</comment>
<comment type="subcellular location">
    <subcellularLocation>
        <location evidence="1">Cytoplasm</location>
    </subcellularLocation>
</comment>
<comment type="similarity">
    <text evidence="1">Belongs to the class-II aminoacyl-tRNA synthetase family.</text>
</comment>
<accession>C4K2V3</accession>